<protein>
    <recommendedName>
        <fullName evidence="1">S-adenosylmethionine decarboxylase proenzyme</fullName>
        <shortName evidence="1">AdoMetDC</shortName>
        <shortName evidence="1">SAMDC</shortName>
        <ecNumber evidence="1">4.1.1.50</ecNumber>
    </recommendedName>
    <component>
        <recommendedName>
            <fullName evidence="1">S-adenosylmethionine decarboxylase beta chain</fullName>
        </recommendedName>
    </component>
    <component>
        <recommendedName>
            <fullName evidence="1">S-adenosylmethionine decarboxylase alpha chain</fullName>
        </recommendedName>
    </component>
</protein>
<keyword id="KW-0068">Autocatalytic cleavage</keyword>
<keyword id="KW-0210">Decarboxylase</keyword>
<keyword id="KW-0456">Lyase</keyword>
<keyword id="KW-0620">Polyamine biosynthesis</keyword>
<keyword id="KW-0670">Pyruvate</keyword>
<keyword id="KW-1185">Reference proteome</keyword>
<keyword id="KW-0949">S-adenosyl-L-methionine</keyword>
<keyword id="KW-0704">Schiff base</keyword>
<keyword id="KW-0745">Spermidine biosynthesis</keyword>
<keyword id="KW-0865">Zymogen</keyword>
<reference key="1">
    <citation type="journal article" date="2000" name="Nature">
        <title>Complete genome sequence of Pseudomonas aeruginosa PAO1, an opportunistic pathogen.</title>
        <authorList>
            <person name="Stover C.K."/>
            <person name="Pham X.-Q.T."/>
            <person name="Erwin A.L."/>
            <person name="Mizoguchi S.D."/>
            <person name="Warrener P."/>
            <person name="Hickey M.J."/>
            <person name="Brinkman F.S.L."/>
            <person name="Hufnagle W.O."/>
            <person name="Kowalik D.J."/>
            <person name="Lagrou M."/>
            <person name="Garber R.L."/>
            <person name="Goltry L."/>
            <person name="Tolentino E."/>
            <person name="Westbrock-Wadman S."/>
            <person name="Yuan Y."/>
            <person name="Brody L.L."/>
            <person name="Coulter S.N."/>
            <person name="Folger K.R."/>
            <person name="Kas A."/>
            <person name="Larbig K."/>
            <person name="Lim R.M."/>
            <person name="Smith K.A."/>
            <person name="Spencer D.H."/>
            <person name="Wong G.K.-S."/>
            <person name="Wu Z."/>
            <person name="Paulsen I.T."/>
            <person name="Reizer J."/>
            <person name="Saier M.H. Jr."/>
            <person name="Hancock R.E.W."/>
            <person name="Lory S."/>
            <person name="Olson M.V."/>
        </authorList>
    </citation>
    <scope>NUCLEOTIDE SEQUENCE [LARGE SCALE GENOMIC DNA]</scope>
    <source>
        <strain>ATCC 15692 / DSM 22644 / CIP 104116 / JCM 14847 / LMG 12228 / 1C / PRS 101 / PAO1</strain>
    </source>
</reference>
<feature type="chain" id="PRO_0000030053" description="S-adenosylmethionine decarboxylase beta chain" evidence="1">
    <location>
        <begin position="1"/>
        <end position="112"/>
    </location>
</feature>
<feature type="chain" id="PRO_0000030054" description="S-adenosylmethionine decarboxylase alpha chain" evidence="1">
    <location>
        <begin position="113"/>
        <end position="264"/>
    </location>
</feature>
<feature type="active site" description="Schiff-base intermediate with substrate; via pyruvic acid" evidence="1">
    <location>
        <position position="113"/>
    </location>
</feature>
<feature type="active site" description="Proton acceptor; for processing activity" evidence="1">
    <location>
        <position position="118"/>
    </location>
</feature>
<feature type="active site" description="Proton donor; for catalytic activity" evidence="1">
    <location>
        <position position="141"/>
    </location>
</feature>
<feature type="site" description="Cleavage (non-hydrolytic); by autolysis" evidence="1">
    <location>
        <begin position="112"/>
        <end position="113"/>
    </location>
</feature>
<feature type="modified residue" description="Pyruvic acid (Ser); by autocatalysis" evidence="1">
    <location>
        <position position="113"/>
    </location>
</feature>
<name>SPED_PSEAE</name>
<evidence type="ECO:0000255" key="1">
    <source>
        <dbReference type="HAMAP-Rule" id="MF_00465"/>
    </source>
</evidence>
<comment type="function">
    <text evidence="1">Catalyzes the decarboxylation of S-adenosylmethionine to S-adenosylmethioninamine (dcAdoMet), the propylamine donor required for the synthesis of the polyamines spermine and spermidine from the diamine putrescine.</text>
</comment>
<comment type="catalytic activity">
    <reaction evidence="1">
        <text>S-adenosyl-L-methionine + H(+) = S-adenosyl 3-(methylsulfanyl)propylamine + CO2</text>
        <dbReference type="Rhea" id="RHEA:15981"/>
        <dbReference type="ChEBI" id="CHEBI:15378"/>
        <dbReference type="ChEBI" id="CHEBI:16526"/>
        <dbReference type="ChEBI" id="CHEBI:57443"/>
        <dbReference type="ChEBI" id="CHEBI:59789"/>
        <dbReference type="EC" id="4.1.1.50"/>
    </reaction>
</comment>
<comment type="cofactor">
    <cofactor evidence="1">
        <name>pyruvate</name>
        <dbReference type="ChEBI" id="CHEBI:15361"/>
    </cofactor>
    <text evidence="1">Binds 1 pyruvoyl group covalently per subunit.</text>
</comment>
<comment type="pathway">
    <text evidence="1">Amine and polyamine biosynthesis; S-adenosylmethioninamine biosynthesis; S-adenosylmethioninamine from S-adenosyl-L-methionine: step 1/1.</text>
</comment>
<comment type="subunit">
    <text evidence="1">Heterooctamer of four alpha and four beta chains arranged as a tetramer of alpha/beta heterodimers.</text>
</comment>
<comment type="PTM">
    <text evidence="1">Is synthesized initially as an inactive proenzyme. Formation of the active enzyme involves a self-maturation process in which the active site pyruvoyl group is generated from an internal serine residue via an autocatalytic post-translational modification. Two non-identical subunits are generated from the proenzyme in this reaction, and the pyruvate is formed at the N-terminus of the alpha chain, which is derived from the carboxyl end of the proenzyme. The post-translation cleavage follows an unusual pathway, termed non-hydrolytic serinolysis, in which the side chain hydroxyl group of the serine supplies its oxygen atom to form the C-terminus of the beta chain, while the remainder of the serine residue undergoes an oxidative deamination to produce ammonia and the pyruvoyl group blocking the N-terminus of the alpha chain.</text>
</comment>
<comment type="similarity">
    <text evidence="1">Belongs to the prokaryotic AdoMetDC family. Type 2 subfamily.</text>
</comment>
<dbReference type="EC" id="4.1.1.50" evidence="1"/>
<dbReference type="EMBL" id="AE004091">
    <property type="protein sequence ID" value="AAG04043.1"/>
    <property type="molecule type" value="Genomic_DNA"/>
</dbReference>
<dbReference type="PIR" id="D83564">
    <property type="entry name" value="D83564"/>
</dbReference>
<dbReference type="RefSeq" id="NP_249345.1">
    <property type="nucleotide sequence ID" value="NC_002516.2"/>
</dbReference>
<dbReference type="RefSeq" id="WP_003101641.1">
    <property type="nucleotide sequence ID" value="NZ_QZGE01000010.1"/>
</dbReference>
<dbReference type="SMR" id="Q9I5R7"/>
<dbReference type="FunCoup" id="Q9I5R7">
    <property type="interactions" value="91"/>
</dbReference>
<dbReference type="STRING" id="208964.PA0654"/>
<dbReference type="PaxDb" id="208964-PA0654"/>
<dbReference type="GeneID" id="878446"/>
<dbReference type="KEGG" id="pae:PA0654"/>
<dbReference type="PATRIC" id="fig|208964.12.peg.685"/>
<dbReference type="PseudoCAP" id="PA0654"/>
<dbReference type="HOGENOM" id="CLU_092007_0_0_6"/>
<dbReference type="InParanoid" id="Q9I5R7"/>
<dbReference type="OrthoDB" id="5290709at2"/>
<dbReference type="PhylomeDB" id="Q9I5R7"/>
<dbReference type="BioCyc" id="PAER208964:G1FZ6-659-MONOMER"/>
<dbReference type="UniPathway" id="UPA00331">
    <property type="reaction ID" value="UER00451"/>
</dbReference>
<dbReference type="Proteomes" id="UP000002438">
    <property type="component" value="Chromosome"/>
</dbReference>
<dbReference type="GO" id="GO:0005829">
    <property type="term" value="C:cytosol"/>
    <property type="evidence" value="ECO:0000318"/>
    <property type="project" value="GO_Central"/>
</dbReference>
<dbReference type="GO" id="GO:0004014">
    <property type="term" value="F:adenosylmethionine decarboxylase activity"/>
    <property type="evidence" value="ECO:0000318"/>
    <property type="project" value="GO_Central"/>
</dbReference>
<dbReference type="GO" id="GO:0008295">
    <property type="term" value="P:spermidine biosynthetic process"/>
    <property type="evidence" value="ECO:0000318"/>
    <property type="project" value="GO_Central"/>
</dbReference>
<dbReference type="FunFam" id="3.60.90.10:FF:000001">
    <property type="entry name" value="S-adenosylmethionine decarboxylase proenzyme"/>
    <property type="match status" value="1"/>
</dbReference>
<dbReference type="Gene3D" id="3.60.90.10">
    <property type="entry name" value="S-adenosylmethionine decarboxylase"/>
    <property type="match status" value="1"/>
</dbReference>
<dbReference type="HAMAP" id="MF_00465">
    <property type="entry name" value="AdoMetDC_2"/>
    <property type="match status" value="1"/>
</dbReference>
<dbReference type="InterPro" id="IPR003826">
    <property type="entry name" value="AdoMetDC_fam_prok"/>
</dbReference>
<dbReference type="InterPro" id="IPR009165">
    <property type="entry name" value="S-AdoMet_deCO2ase_bac"/>
</dbReference>
<dbReference type="InterPro" id="IPR016067">
    <property type="entry name" value="S-AdoMet_deCO2ase_core"/>
</dbReference>
<dbReference type="NCBIfam" id="TIGR03331">
    <property type="entry name" value="SAM_DCase_Eco"/>
    <property type="match status" value="1"/>
</dbReference>
<dbReference type="PANTHER" id="PTHR33866">
    <property type="entry name" value="S-ADENOSYLMETHIONINE DECARBOXYLASE PROENZYME"/>
    <property type="match status" value="1"/>
</dbReference>
<dbReference type="PANTHER" id="PTHR33866:SF1">
    <property type="entry name" value="S-ADENOSYLMETHIONINE DECARBOXYLASE PROENZYME"/>
    <property type="match status" value="1"/>
</dbReference>
<dbReference type="Pfam" id="PF02675">
    <property type="entry name" value="AdoMet_dc"/>
    <property type="match status" value="1"/>
</dbReference>
<dbReference type="PIRSF" id="PIRSF001356">
    <property type="entry name" value="SAM_decarboxylas"/>
    <property type="match status" value="1"/>
</dbReference>
<dbReference type="SUPFAM" id="SSF56276">
    <property type="entry name" value="S-adenosylmethionine decarboxylase"/>
    <property type="match status" value="1"/>
</dbReference>
<accession>Q9I5R7</accession>
<sequence length="264" mass="30478">MKSKLKLHGFNNLTKTLSFNIYDICYAETPEDLQAYVQYIDEEYDAERLTQILTDVVDIIGANILNIARQDYDPQGASVTILISEQPVTPTDSQIEESPGPLPDTILAHLDKSHITVHTYPEIHPVDGIATFRVDIDVSTCGVISPLKALNYLIHQFDSDIVTVDYRVRGFTRDIEGRKHFIDHEINSIQNYLSDDTREAYQMTDVNVYQENLFHTKMLLKDFELENYLFGDATRTLSAEQREQVTERLKHEMLEIFYARNMPR</sequence>
<gene>
    <name evidence="1" type="primary">speD</name>
    <name type="ordered locus">PA0654</name>
</gene>
<organism>
    <name type="scientific">Pseudomonas aeruginosa (strain ATCC 15692 / DSM 22644 / CIP 104116 / JCM 14847 / LMG 12228 / 1C / PRS 101 / PAO1)</name>
    <dbReference type="NCBI Taxonomy" id="208964"/>
    <lineage>
        <taxon>Bacteria</taxon>
        <taxon>Pseudomonadati</taxon>
        <taxon>Pseudomonadota</taxon>
        <taxon>Gammaproteobacteria</taxon>
        <taxon>Pseudomonadales</taxon>
        <taxon>Pseudomonadaceae</taxon>
        <taxon>Pseudomonas</taxon>
    </lineage>
</organism>
<proteinExistence type="inferred from homology"/>